<name>ARK2N_HUMAN</name>
<evidence type="ECO:0000250" key="1">
    <source>
        <dbReference type="UniProtKB" id="Q8BH50"/>
    </source>
</evidence>
<evidence type="ECO:0000255" key="2"/>
<evidence type="ECO:0000256" key="3">
    <source>
        <dbReference type="SAM" id="MobiDB-lite"/>
    </source>
</evidence>
<evidence type="ECO:0000269" key="4">
    <source>
    </source>
</evidence>
<evidence type="ECO:0000269" key="5">
    <source>
    </source>
</evidence>
<evidence type="ECO:0000269" key="6">
    <source>
    </source>
</evidence>
<evidence type="ECO:0000269" key="7">
    <source>
    </source>
</evidence>
<evidence type="ECO:0000303" key="8">
    <source>
    </source>
</evidence>
<evidence type="ECO:0000303" key="9">
    <source>
    </source>
</evidence>
<evidence type="ECO:0000303" key="10">
    <source>
    </source>
</evidence>
<evidence type="ECO:0000303" key="11">
    <source>
    </source>
</evidence>
<evidence type="ECO:0000303" key="12">
    <source>
    </source>
</evidence>
<evidence type="ECO:0000303" key="13">
    <source>
    </source>
</evidence>
<evidence type="ECO:0000305" key="14"/>
<evidence type="ECO:0000312" key="15">
    <source>
        <dbReference type="HGNC" id="HGNC:28172"/>
    </source>
</evidence>
<evidence type="ECO:0007744" key="16">
    <source>
    </source>
</evidence>
<evidence type="ECO:0007744" key="17">
    <source>
    </source>
</evidence>
<evidence type="ECO:0007744" key="18">
    <source>
    </source>
</evidence>
<evidence type="ECO:0007744" key="19">
    <source>
    </source>
</evidence>
<evidence type="ECO:0007744" key="20">
    <source>
    </source>
</evidence>
<evidence type="ECO:0007744" key="21">
    <source>
    </source>
</evidence>
<sequence length="404" mass="43395">MKMEEAVGKVEELIESEAPPKASEQETAKEEDGSVELESQVQKDGVADSTVISSMPCLLMELRRDSSESQLASTESDKPTTGRVYESDSSNHCMLSPSSSGHLADSDTLSSAEENEPSQAETAVEGDPSGVSGATVGRKSRRSRSESETSTMAAKKNRQSSDKQNGRVAKVKGHRSQKHKERIRLLRQKREAAARKKYNLLQDSSTSDSDLTCDSSTSSSDDDEEVSGSSKTITAEIPDGPPVVAHYDMSDTNSDPEVVNVDNLLAAAVVQEHSNSVGGQDTGATWRTSGLLEELNAEAGHLDPGFLASDKTSAGNAPLNEEINIASSDSEVEIVGVQEHARCVHPRGGVIQSVSSWKHGSGTQYVSTRQTQSWTAVTPQQTWASPAEVVDLTLDEDSRRKYLL</sequence>
<dbReference type="EMBL" id="BK005125">
    <property type="protein sequence ID" value="DAA05329.1"/>
    <property type="molecule type" value="mRNA"/>
</dbReference>
<dbReference type="EMBL" id="AK289738">
    <property type="protein sequence ID" value="BAF82427.1"/>
    <property type="molecule type" value="mRNA"/>
</dbReference>
<dbReference type="EMBL" id="AK292981">
    <property type="protein sequence ID" value="BAF85670.1"/>
    <property type="molecule type" value="mRNA"/>
</dbReference>
<dbReference type="EMBL" id="AL713661">
    <property type="protein sequence ID" value="CAD28470.1"/>
    <property type="molecule type" value="mRNA"/>
</dbReference>
<dbReference type="EMBL" id="AL832027">
    <property type="protein sequence ID" value="CAD89920.1"/>
    <property type="molecule type" value="mRNA"/>
</dbReference>
<dbReference type="EMBL" id="BX640683">
    <property type="protein sequence ID" value="CAE45812.1"/>
    <property type="molecule type" value="mRNA"/>
</dbReference>
<dbReference type="EMBL" id="AC021763">
    <property type="status" value="NOT_ANNOTATED_CDS"/>
    <property type="molecule type" value="Genomic_DNA"/>
</dbReference>
<dbReference type="EMBL" id="AC118647">
    <property type="status" value="NOT_ANNOTATED_CDS"/>
    <property type="molecule type" value="Genomic_DNA"/>
</dbReference>
<dbReference type="EMBL" id="KF573673">
    <property type="status" value="NOT_ANNOTATED_CDS"/>
    <property type="molecule type" value="Genomic_DNA"/>
</dbReference>
<dbReference type="EMBL" id="CH471088">
    <property type="protein sequence ID" value="EAX01472.1"/>
    <property type="molecule type" value="Genomic_DNA"/>
</dbReference>
<dbReference type="EMBL" id="CH471088">
    <property type="protein sequence ID" value="EAX01473.1"/>
    <property type="molecule type" value="Genomic_DNA"/>
</dbReference>
<dbReference type="EMBL" id="BC016149">
    <property type="protein sequence ID" value="AAH16149.1"/>
    <property type="molecule type" value="mRNA"/>
</dbReference>
<dbReference type="EMBL" id="BC084579">
    <property type="protein sequence ID" value="AAH84579.1"/>
    <property type="molecule type" value="mRNA"/>
</dbReference>
<dbReference type="CCDS" id="CCDS42430.1">
    <molecule id="Q96B23-1"/>
</dbReference>
<dbReference type="CCDS" id="CCDS42431.1">
    <molecule id="Q96B23-2"/>
</dbReference>
<dbReference type="RefSeq" id="NP_001008240.1">
    <molecule id="Q96B23-2"/>
    <property type="nucleotide sequence ID" value="NM_001008239.3"/>
</dbReference>
<dbReference type="RefSeq" id="NP_659492.1">
    <molecule id="Q96B23-1"/>
    <property type="nucleotide sequence ID" value="NM_145055.5"/>
</dbReference>
<dbReference type="RefSeq" id="XP_011524124.1">
    <molecule id="Q96B23-1"/>
    <property type="nucleotide sequence ID" value="XM_011525822.3"/>
</dbReference>
<dbReference type="RefSeq" id="XP_016881044.1">
    <molecule id="Q96B23-2"/>
    <property type="nucleotide sequence ID" value="XM_017025555.2"/>
</dbReference>
<dbReference type="SMR" id="Q96B23"/>
<dbReference type="BioGRID" id="127053">
    <property type="interactions" value="121"/>
</dbReference>
<dbReference type="FunCoup" id="Q96B23">
    <property type="interactions" value="1763"/>
</dbReference>
<dbReference type="IntAct" id="Q96B23">
    <property type="interactions" value="72"/>
</dbReference>
<dbReference type="MINT" id="Q96B23"/>
<dbReference type="STRING" id="9606.ENSP00000481626"/>
<dbReference type="GlyGen" id="Q96B23">
    <property type="glycosylation" value="3 sites, 1 O-linked glycan (2 sites)"/>
</dbReference>
<dbReference type="iPTMnet" id="Q96B23"/>
<dbReference type="PhosphoSitePlus" id="Q96B23"/>
<dbReference type="BioMuta" id="C18orf25"/>
<dbReference type="DMDM" id="209572602"/>
<dbReference type="jPOST" id="Q96B23"/>
<dbReference type="MassIVE" id="Q96B23"/>
<dbReference type="PaxDb" id="9606-ENSP00000481626"/>
<dbReference type="PeptideAtlas" id="Q96B23"/>
<dbReference type="ProteomicsDB" id="76036">
    <molecule id="Q96B23-1"/>
</dbReference>
<dbReference type="ProteomicsDB" id="76037">
    <molecule id="Q96B23-2"/>
</dbReference>
<dbReference type="Pumba" id="Q96B23"/>
<dbReference type="Antibodypedia" id="22461">
    <property type="antibodies" value="113 antibodies from 17 providers"/>
</dbReference>
<dbReference type="DNASU" id="147339"/>
<dbReference type="Ensembl" id="ENST00000615052.5">
    <molecule id="Q96B23-1"/>
    <property type="protein sequence ID" value="ENSP00000481626.1"/>
    <property type="gene ID" value="ENSG00000152242.11"/>
</dbReference>
<dbReference type="Ensembl" id="ENST00000619301.4">
    <molecule id="Q96B23-2"/>
    <property type="protein sequence ID" value="ENSP00000480074.1"/>
    <property type="gene ID" value="ENSG00000152242.11"/>
</dbReference>
<dbReference type="GeneID" id="147339"/>
<dbReference type="KEGG" id="hsa:147339"/>
<dbReference type="MANE-Select" id="ENST00000615052.5">
    <property type="protein sequence ID" value="ENSP00000481626.1"/>
    <property type="RefSeq nucleotide sequence ID" value="NM_145055.5"/>
    <property type="RefSeq protein sequence ID" value="NP_659492.1"/>
</dbReference>
<dbReference type="UCSC" id="uc032hdb.2">
    <property type="organism name" value="human"/>
</dbReference>
<dbReference type="UCSC" id="uc032hdc.2">
    <molecule id="Q96B23-1"/>
    <property type="organism name" value="human"/>
</dbReference>
<dbReference type="AGR" id="HGNC:28172"/>
<dbReference type="CTD" id="147339"/>
<dbReference type="DisGeNET" id="147339"/>
<dbReference type="GeneCards" id="ARK2N"/>
<dbReference type="HGNC" id="HGNC:28172">
    <property type="gene designation" value="ARK2N"/>
</dbReference>
<dbReference type="HPA" id="ENSG00000152242">
    <property type="expression patterns" value="Low tissue specificity"/>
</dbReference>
<dbReference type="neXtProt" id="NX_Q96B23"/>
<dbReference type="OpenTargets" id="ENSG00000152242"/>
<dbReference type="PharmGKB" id="PA134919240"/>
<dbReference type="VEuPathDB" id="HostDB:ENSG00000152242"/>
<dbReference type="eggNOG" id="ENOG502QUC3">
    <property type="taxonomic scope" value="Eukaryota"/>
</dbReference>
<dbReference type="GeneTree" id="ENSGT00390000016167"/>
<dbReference type="HOGENOM" id="CLU_056953_0_0_1"/>
<dbReference type="InParanoid" id="Q96B23"/>
<dbReference type="OMA" id="PVIAHYD"/>
<dbReference type="OrthoDB" id="9938906at2759"/>
<dbReference type="PAN-GO" id="Q96B23">
    <property type="GO annotations" value="2 GO annotations based on evolutionary models"/>
</dbReference>
<dbReference type="PhylomeDB" id="Q96B23"/>
<dbReference type="TreeFam" id="TF351299"/>
<dbReference type="PathwayCommons" id="Q96B23"/>
<dbReference type="SignaLink" id="Q96B23"/>
<dbReference type="BioGRID-ORCS" id="147339">
    <property type="hits" value="9 hits in 1120 CRISPR screens"/>
</dbReference>
<dbReference type="ChiTaRS" id="C18orf25">
    <property type="organism name" value="human"/>
</dbReference>
<dbReference type="GenomeRNAi" id="147339"/>
<dbReference type="Pharos" id="Q96B23">
    <property type="development level" value="Tdark"/>
</dbReference>
<dbReference type="PRO" id="PR:Q96B23"/>
<dbReference type="Proteomes" id="UP000005640">
    <property type="component" value="Chromosome 18"/>
</dbReference>
<dbReference type="RNAct" id="Q96B23">
    <property type="molecule type" value="protein"/>
</dbReference>
<dbReference type="Bgee" id="ENSG00000152242">
    <property type="expression patterns" value="Expressed in buccal mucosa cell and 185 other cell types or tissues"/>
</dbReference>
<dbReference type="ExpressionAtlas" id="Q96B23">
    <property type="expression patterns" value="baseline and differential"/>
</dbReference>
<dbReference type="GO" id="GO:0000785">
    <property type="term" value="C:chromatin"/>
    <property type="evidence" value="ECO:0000314"/>
    <property type="project" value="UniProt"/>
</dbReference>
<dbReference type="GO" id="GO:0005634">
    <property type="term" value="C:nucleus"/>
    <property type="evidence" value="ECO:0007669"/>
    <property type="project" value="UniProtKB-SubCell"/>
</dbReference>
<dbReference type="GO" id="GO:0003714">
    <property type="term" value="F:transcription corepressor activity"/>
    <property type="evidence" value="ECO:0000314"/>
    <property type="project" value="UniProt"/>
</dbReference>
<dbReference type="GO" id="GO:0061630">
    <property type="term" value="F:ubiquitin protein ligase activity"/>
    <property type="evidence" value="ECO:0000318"/>
    <property type="project" value="GO_Central"/>
</dbReference>
<dbReference type="GO" id="GO:1903901">
    <property type="term" value="P:negative regulation of viral life cycle"/>
    <property type="evidence" value="ECO:0000314"/>
    <property type="project" value="UniProt"/>
</dbReference>
<dbReference type="GO" id="GO:0006511">
    <property type="term" value="P:ubiquitin-dependent protein catabolic process"/>
    <property type="evidence" value="ECO:0000318"/>
    <property type="project" value="GO_Central"/>
</dbReference>
<dbReference type="InterPro" id="IPR029306">
    <property type="entry name" value="RNF111_N"/>
</dbReference>
<dbReference type="InterPro" id="IPR051073">
    <property type="entry name" value="ZNRF3_Arkadia_E3_ligases"/>
</dbReference>
<dbReference type="PANTHER" id="PTHR16200">
    <property type="entry name" value="RING ZINC FINGER"/>
    <property type="match status" value="1"/>
</dbReference>
<dbReference type="Pfam" id="PF15303">
    <property type="entry name" value="RNF111_N"/>
    <property type="match status" value="1"/>
</dbReference>
<reference key="1">
    <citation type="journal article" date="2005" name="Psychiatr. Genet.">
        <title>Candidate psychiatric illness genes identified in patients with pericentric inversions of chromosome 18.</title>
        <authorList>
            <person name="Pickard B.S."/>
            <person name="Malloy M.P."/>
            <person name="Clark L."/>
            <person name="Lehellard S."/>
            <person name="Ewald H.L."/>
            <person name="Mors O."/>
            <person name="Porteous D.J."/>
            <person name="Blackwood D.H."/>
            <person name="Muir W.J."/>
        </authorList>
    </citation>
    <scope>NUCLEOTIDE SEQUENCE [MRNA] (ISOFORM 1)</scope>
</reference>
<reference key="2">
    <citation type="journal article" date="2004" name="Nat. Genet.">
        <title>Complete sequencing and characterization of 21,243 full-length human cDNAs.</title>
        <authorList>
            <person name="Ota T."/>
            <person name="Suzuki Y."/>
            <person name="Nishikawa T."/>
            <person name="Otsuki T."/>
            <person name="Sugiyama T."/>
            <person name="Irie R."/>
            <person name="Wakamatsu A."/>
            <person name="Hayashi K."/>
            <person name="Sato H."/>
            <person name="Nagai K."/>
            <person name="Kimura K."/>
            <person name="Makita H."/>
            <person name="Sekine M."/>
            <person name="Obayashi M."/>
            <person name="Nishi T."/>
            <person name="Shibahara T."/>
            <person name="Tanaka T."/>
            <person name="Ishii S."/>
            <person name="Yamamoto J."/>
            <person name="Saito K."/>
            <person name="Kawai Y."/>
            <person name="Isono Y."/>
            <person name="Nakamura Y."/>
            <person name="Nagahari K."/>
            <person name="Murakami K."/>
            <person name="Yasuda T."/>
            <person name="Iwayanagi T."/>
            <person name="Wagatsuma M."/>
            <person name="Shiratori A."/>
            <person name="Sudo H."/>
            <person name="Hosoiri T."/>
            <person name="Kaku Y."/>
            <person name="Kodaira H."/>
            <person name="Kondo H."/>
            <person name="Sugawara M."/>
            <person name="Takahashi M."/>
            <person name="Kanda K."/>
            <person name="Yokoi T."/>
            <person name="Furuya T."/>
            <person name="Kikkawa E."/>
            <person name="Omura Y."/>
            <person name="Abe K."/>
            <person name="Kamihara K."/>
            <person name="Katsuta N."/>
            <person name="Sato K."/>
            <person name="Tanikawa M."/>
            <person name="Yamazaki M."/>
            <person name="Ninomiya K."/>
            <person name="Ishibashi T."/>
            <person name="Yamashita H."/>
            <person name="Murakawa K."/>
            <person name="Fujimori K."/>
            <person name="Tanai H."/>
            <person name="Kimata M."/>
            <person name="Watanabe M."/>
            <person name="Hiraoka S."/>
            <person name="Chiba Y."/>
            <person name="Ishida S."/>
            <person name="Ono Y."/>
            <person name="Takiguchi S."/>
            <person name="Watanabe S."/>
            <person name="Yosida M."/>
            <person name="Hotuta T."/>
            <person name="Kusano J."/>
            <person name="Kanehori K."/>
            <person name="Takahashi-Fujii A."/>
            <person name="Hara H."/>
            <person name="Tanase T.-O."/>
            <person name="Nomura Y."/>
            <person name="Togiya S."/>
            <person name="Komai F."/>
            <person name="Hara R."/>
            <person name="Takeuchi K."/>
            <person name="Arita M."/>
            <person name="Imose N."/>
            <person name="Musashino K."/>
            <person name="Yuuki H."/>
            <person name="Oshima A."/>
            <person name="Sasaki N."/>
            <person name="Aotsuka S."/>
            <person name="Yoshikawa Y."/>
            <person name="Matsunawa H."/>
            <person name="Ichihara T."/>
            <person name="Shiohata N."/>
            <person name="Sano S."/>
            <person name="Moriya S."/>
            <person name="Momiyama H."/>
            <person name="Satoh N."/>
            <person name="Takami S."/>
            <person name="Terashima Y."/>
            <person name="Suzuki O."/>
            <person name="Nakagawa S."/>
            <person name="Senoh A."/>
            <person name="Mizoguchi H."/>
            <person name="Goto Y."/>
            <person name="Shimizu F."/>
            <person name="Wakebe H."/>
            <person name="Hishigaki H."/>
            <person name="Watanabe T."/>
            <person name="Sugiyama A."/>
            <person name="Takemoto M."/>
            <person name="Kawakami B."/>
            <person name="Yamazaki M."/>
            <person name="Watanabe K."/>
            <person name="Kumagai A."/>
            <person name="Itakura S."/>
            <person name="Fukuzumi Y."/>
            <person name="Fujimori Y."/>
            <person name="Komiyama M."/>
            <person name="Tashiro H."/>
            <person name="Tanigami A."/>
            <person name="Fujiwara T."/>
            <person name="Ono T."/>
            <person name="Yamada K."/>
            <person name="Fujii Y."/>
            <person name="Ozaki K."/>
            <person name="Hirao M."/>
            <person name="Ohmori Y."/>
            <person name="Kawabata A."/>
            <person name="Hikiji T."/>
            <person name="Kobatake N."/>
            <person name="Inagaki H."/>
            <person name="Ikema Y."/>
            <person name="Okamoto S."/>
            <person name="Okitani R."/>
            <person name="Kawakami T."/>
            <person name="Noguchi S."/>
            <person name="Itoh T."/>
            <person name="Shigeta K."/>
            <person name="Senba T."/>
            <person name="Matsumura K."/>
            <person name="Nakajima Y."/>
            <person name="Mizuno T."/>
            <person name="Morinaga M."/>
            <person name="Sasaki M."/>
            <person name="Togashi T."/>
            <person name="Oyama M."/>
            <person name="Hata H."/>
            <person name="Watanabe M."/>
            <person name="Komatsu T."/>
            <person name="Mizushima-Sugano J."/>
            <person name="Satoh T."/>
            <person name="Shirai Y."/>
            <person name="Takahashi Y."/>
            <person name="Nakagawa K."/>
            <person name="Okumura K."/>
            <person name="Nagase T."/>
            <person name="Nomura N."/>
            <person name="Kikuchi H."/>
            <person name="Masuho Y."/>
            <person name="Yamashita R."/>
            <person name="Nakai K."/>
            <person name="Yada T."/>
            <person name="Nakamura Y."/>
            <person name="Ohara O."/>
            <person name="Isogai T."/>
            <person name="Sugano S."/>
        </authorList>
    </citation>
    <scope>NUCLEOTIDE SEQUENCE [LARGE SCALE MRNA] (ISOFORM 2)</scope>
    <scope>VARIANT ALA-314 DEL</scope>
    <source>
        <tissue>Brain</tissue>
        <tissue>Trachea</tissue>
    </source>
</reference>
<reference key="3">
    <citation type="journal article" date="2007" name="BMC Genomics">
        <title>The full-ORF clone resource of the German cDNA consortium.</title>
        <authorList>
            <person name="Bechtel S."/>
            <person name="Rosenfelder H."/>
            <person name="Duda A."/>
            <person name="Schmidt C.P."/>
            <person name="Ernst U."/>
            <person name="Wellenreuther R."/>
            <person name="Mehrle A."/>
            <person name="Schuster C."/>
            <person name="Bahr A."/>
            <person name="Bloecker H."/>
            <person name="Heubner D."/>
            <person name="Hoerlein A."/>
            <person name="Michel G."/>
            <person name="Wedler H."/>
            <person name="Koehrer K."/>
            <person name="Ottenwaelder B."/>
            <person name="Poustka A."/>
            <person name="Wiemann S."/>
            <person name="Schupp I."/>
        </authorList>
    </citation>
    <scope>NUCLEOTIDE SEQUENCE [LARGE SCALE MRNA] (ISOFORM 2)</scope>
    <source>
        <tissue>Lymph node</tissue>
        <tissue>Skeletal muscle</tissue>
    </source>
</reference>
<reference key="4">
    <citation type="journal article" date="2005" name="Nature">
        <title>DNA sequence and analysis of human chromosome 18.</title>
        <authorList>
            <person name="Nusbaum C."/>
            <person name="Zody M.C."/>
            <person name="Borowsky M.L."/>
            <person name="Kamal M."/>
            <person name="Kodira C.D."/>
            <person name="Taylor T.D."/>
            <person name="Whittaker C.A."/>
            <person name="Chang J.L."/>
            <person name="Cuomo C.A."/>
            <person name="Dewar K."/>
            <person name="FitzGerald M.G."/>
            <person name="Yang X."/>
            <person name="Abouelleil A."/>
            <person name="Allen N.R."/>
            <person name="Anderson S."/>
            <person name="Bloom T."/>
            <person name="Bugalter B."/>
            <person name="Butler J."/>
            <person name="Cook A."/>
            <person name="DeCaprio D."/>
            <person name="Engels R."/>
            <person name="Garber M."/>
            <person name="Gnirke A."/>
            <person name="Hafez N."/>
            <person name="Hall J.L."/>
            <person name="Norman C.H."/>
            <person name="Itoh T."/>
            <person name="Jaffe D.B."/>
            <person name="Kuroki Y."/>
            <person name="Lehoczky J."/>
            <person name="Lui A."/>
            <person name="Macdonald P."/>
            <person name="Mauceli E."/>
            <person name="Mikkelsen T.S."/>
            <person name="Naylor J.W."/>
            <person name="Nicol R."/>
            <person name="Nguyen C."/>
            <person name="Noguchi H."/>
            <person name="O'Leary S.B."/>
            <person name="Piqani B."/>
            <person name="Smith C.L."/>
            <person name="Talamas J.A."/>
            <person name="Topham K."/>
            <person name="Totoki Y."/>
            <person name="Toyoda A."/>
            <person name="Wain H.M."/>
            <person name="Young S.K."/>
            <person name="Zeng Q."/>
            <person name="Zimmer A.R."/>
            <person name="Fujiyama A."/>
            <person name="Hattori M."/>
            <person name="Birren B.W."/>
            <person name="Sakaki Y."/>
            <person name="Lander E.S."/>
        </authorList>
    </citation>
    <scope>NUCLEOTIDE SEQUENCE [LARGE SCALE GENOMIC DNA]</scope>
</reference>
<reference key="5">
    <citation type="submission" date="2005-07" db="EMBL/GenBank/DDBJ databases">
        <authorList>
            <person name="Mural R.J."/>
            <person name="Istrail S."/>
            <person name="Sutton G.G."/>
            <person name="Florea L."/>
            <person name="Halpern A.L."/>
            <person name="Mobarry C.M."/>
            <person name="Lippert R."/>
            <person name="Walenz B."/>
            <person name="Shatkay H."/>
            <person name="Dew I."/>
            <person name="Miller J.R."/>
            <person name="Flanigan M.J."/>
            <person name="Edwards N.J."/>
            <person name="Bolanos R."/>
            <person name="Fasulo D."/>
            <person name="Halldorsson B.V."/>
            <person name="Hannenhalli S."/>
            <person name="Turner R."/>
            <person name="Yooseph S."/>
            <person name="Lu F."/>
            <person name="Nusskern D.R."/>
            <person name="Shue B.C."/>
            <person name="Zheng X.H."/>
            <person name="Zhong F."/>
            <person name="Delcher A.L."/>
            <person name="Huson D.H."/>
            <person name="Kravitz S.A."/>
            <person name="Mouchard L."/>
            <person name="Reinert K."/>
            <person name="Remington K.A."/>
            <person name="Clark A.G."/>
            <person name="Waterman M.S."/>
            <person name="Eichler E.E."/>
            <person name="Adams M.D."/>
            <person name="Hunkapiller M.W."/>
            <person name="Myers E.W."/>
            <person name="Venter J.C."/>
        </authorList>
    </citation>
    <scope>NUCLEOTIDE SEQUENCE [LARGE SCALE GENOMIC DNA]</scope>
</reference>
<reference key="6">
    <citation type="journal article" date="2004" name="Genome Res.">
        <title>The status, quality, and expansion of the NIH full-length cDNA project: the Mammalian Gene Collection (MGC).</title>
        <authorList>
            <consortium name="The MGC Project Team"/>
        </authorList>
    </citation>
    <scope>NUCLEOTIDE SEQUENCE [LARGE SCALE MRNA] (ISOFORMS 1 AND 2)</scope>
    <source>
        <tissue>Eye</tissue>
        <tissue>Lung</tissue>
    </source>
</reference>
<reference key="7">
    <citation type="journal article" date="2006" name="Cell">
        <title>Global, in vivo, and site-specific phosphorylation dynamics in signaling networks.</title>
        <authorList>
            <person name="Olsen J.V."/>
            <person name="Blagoev B."/>
            <person name="Gnad F."/>
            <person name="Macek B."/>
            <person name="Kumar C."/>
            <person name="Mortensen P."/>
            <person name="Mann M."/>
        </authorList>
    </citation>
    <scope>IDENTIFICATION BY MASS SPECTROMETRY [LARGE SCALE ANALYSIS]</scope>
    <source>
        <tissue>Cervix carcinoma</tissue>
    </source>
</reference>
<reference key="8">
    <citation type="journal article" date="2008" name="J. Proteome Res.">
        <title>Combining protein-based IMAC, peptide-based IMAC, and MudPIT for efficient phosphoproteomic analysis.</title>
        <authorList>
            <person name="Cantin G.T."/>
            <person name="Yi W."/>
            <person name="Lu B."/>
            <person name="Park S.K."/>
            <person name="Xu T."/>
            <person name="Lee J.-D."/>
            <person name="Yates J.R. III"/>
        </authorList>
    </citation>
    <scope>IDENTIFICATION BY MASS SPECTROMETRY [LARGE SCALE ANALYSIS]</scope>
    <source>
        <tissue>Cervix carcinoma</tissue>
    </source>
</reference>
<reference key="9">
    <citation type="journal article" date="2008" name="Mol. Cell">
        <title>Kinase-selective enrichment enables quantitative phosphoproteomics of the kinome across the cell cycle.</title>
        <authorList>
            <person name="Daub H."/>
            <person name="Olsen J.V."/>
            <person name="Bairlein M."/>
            <person name="Gnad F."/>
            <person name="Oppermann F.S."/>
            <person name="Korner R."/>
            <person name="Greff Z."/>
            <person name="Keri G."/>
            <person name="Stemmann O."/>
            <person name="Mann M."/>
        </authorList>
    </citation>
    <scope>IDENTIFICATION BY MASS SPECTROMETRY [LARGE SCALE ANALYSIS]</scope>
    <source>
        <tissue>Cervix carcinoma</tissue>
    </source>
</reference>
<reference key="10">
    <citation type="journal article" date="2008" name="Proc. Natl. Acad. Sci. U.S.A.">
        <title>A quantitative atlas of mitotic phosphorylation.</title>
        <authorList>
            <person name="Dephoure N."/>
            <person name="Zhou C."/>
            <person name="Villen J."/>
            <person name="Beausoleil S.A."/>
            <person name="Bakalarski C.E."/>
            <person name="Elledge S.J."/>
            <person name="Gygi S.P."/>
        </authorList>
    </citation>
    <scope>PHOSPHORYLATION [LARGE SCALE ANALYSIS] AT SER-327; SER-328 AND SER-330</scope>
    <scope>IDENTIFICATION BY MASS SPECTROMETRY [LARGE SCALE ANALYSIS]</scope>
    <source>
        <tissue>Cervix carcinoma</tissue>
    </source>
</reference>
<reference key="11">
    <citation type="journal article" date="2009" name="Mol. Cell. Proteomics">
        <title>Large-scale proteomics analysis of the human kinome.</title>
        <authorList>
            <person name="Oppermann F.S."/>
            <person name="Gnad F."/>
            <person name="Olsen J.V."/>
            <person name="Hornberger R."/>
            <person name="Greff Z."/>
            <person name="Keri G."/>
            <person name="Mann M."/>
            <person name="Daub H."/>
        </authorList>
    </citation>
    <scope>IDENTIFICATION BY MASS SPECTROMETRY [LARGE SCALE ANALYSIS]</scope>
</reference>
<reference key="12">
    <citation type="journal article" date="2009" name="Sci. Signal.">
        <title>Quantitative phosphoproteomic analysis of T cell receptor signaling reveals system-wide modulation of protein-protein interactions.</title>
        <authorList>
            <person name="Mayya V."/>
            <person name="Lundgren D.H."/>
            <person name="Hwang S.-I."/>
            <person name="Rezaul K."/>
            <person name="Wu L."/>
            <person name="Eng J.K."/>
            <person name="Rodionov V."/>
            <person name="Han D.K."/>
        </authorList>
    </citation>
    <scope>IDENTIFICATION BY MASS SPECTROMETRY [LARGE SCALE ANALYSIS]</scope>
    <source>
        <tissue>Leukemic T-cell</tissue>
    </source>
</reference>
<reference key="13">
    <citation type="journal article" date="2010" name="Sci. Signal.">
        <title>Quantitative phosphoproteomics reveals widespread full phosphorylation site occupancy during mitosis.</title>
        <authorList>
            <person name="Olsen J.V."/>
            <person name="Vermeulen M."/>
            <person name="Santamaria A."/>
            <person name="Kumar C."/>
            <person name="Miller M.L."/>
            <person name="Jensen L.J."/>
            <person name="Gnad F."/>
            <person name="Cox J."/>
            <person name="Jensen T.S."/>
            <person name="Nigg E.A."/>
            <person name="Brunak S."/>
            <person name="Mann M."/>
        </authorList>
    </citation>
    <scope>PHOSPHORYLATION [LARGE SCALE ANALYSIS] AT SER-66</scope>
    <scope>IDENTIFICATION BY MASS SPECTROMETRY [LARGE SCALE ANALYSIS]</scope>
    <source>
        <tissue>Cervix carcinoma</tissue>
    </source>
</reference>
<reference key="14">
    <citation type="journal article" date="2011" name="Sci. Signal.">
        <title>System-wide temporal characterization of the proteome and phosphoproteome of human embryonic stem cell differentiation.</title>
        <authorList>
            <person name="Rigbolt K.T."/>
            <person name="Prokhorova T.A."/>
            <person name="Akimov V."/>
            <person name="Henningsen J."/>
            <person name="Johansen P.T."/>
            <person name="Kratchmarova I."/>
            <person name="Kassem M."/>
            <person name="Mann M."/>
            <person name="Olsen J.V."/>
            <person name="Blagoev B."/>
        </authorList>
    </citation>
    <scope>PHOSPHORYLATION [LARGE SCALE ANALYSIS] AT SER-66; SER-143; SER-145; SER-327; SER-328 AND SER-330</scope>
    <scope>IDENTIFICATION BY MASS SPECTROMETRY [LARGE SCALE ANALYSIS]</scope>
</reference>
<reference key="15">
    <citation type="journal article" date="2013" name="J. Proteome Res.">
        <title>Toward a comprehensive characterization of a human cancer cell phosphoproteome.</title>
        <authorList>
            <person name="Zhou H."/>
            <person name="Di Palma S."/>
            <person name="Preisinger C."/>
            <person name="Peng M."/>
            <person name="Polat A.N."/>
            <person name="Heck A.J."/>
            <person name="Mohammed S."/>
        </authorList>
    </citation>
    <scope>PHOSPHORYLATION [LARGE SCALE ANALYSIS] AT SER-66 AND SER-67</scope>
    <scope>IDENTIFICATION BY MASS SPECTROMETRY [LARGE SCALE ANALYSIS]</scope>
    <source>
        <tissue>Cervix carcinoma</tissue>
        <tissue>Erythroleukemia</tissue>
    </source>
</reference>
<reference key="16">
    <citation type="journal article" date="2014" name="Mol. Cell. Biol.">
        <title>Identification of a novel protein interaction motif in the regulatory subunit of casein kinase 2.</title>
        <authorList>
            <person name="Cao J.Y."/>
            <person name="Shire K."/>
            <person name="Landry C."/>
            <person name="Gish G.D."/>
            <person name="Pawson T."/>
            <person name="Frappier L."/>
        </authorList>
    </citation>
    <scope>INTERACTION WITH CSNK2B</scope>
</reference>
<reference key="17">
    <citation type="journal article" date="2014" name="Mol. Cell. Proteomics">
        <title>Immunoaffinity enrichment and mass spectrometry analysis of protein methylation.</title>
        <authorList>
            <person name="Guo A."/>
            <person name="Gu H."/>
            <person name="Zhou J."/>
            <person name="Mulhern D."/>
            <person name="Wang Y."/>
            <person name="Lee K.A."/>
            <person name="Yang V."/>
            <person name="Aguiar M."/>
            <person name="Kornhauser J."/>
            <person name="Jia X."/>
            <person name="Ren J."/>
            <person name="Beausoleil S.A."/>
            <person name="Silva J.C."/>
            <person name="Vemulapalli V."/>
            <person name="Bedford M.T."/>
            <person name="Comb M.J."/>
        </authorList>
    </citation>
    <scope>METHYLATION [LARGE SCALE ANALYSIS] AT ARG-347</scope>
    <scope>IDENTIFICATION BY MASS SPECTROMETRY [LARGE SCALE ANALYSIS]</scope>
    <source>
        <tissue>Colon carcinoma</tissue>
    </source>
</reference>
<reference key="18">
    <citation type="journal article" date="2017" name="Nat. Struct. Mol. Biol.">
        <title>Site-specific mapping of the human SUMO proteome reveals co-modification with phosphorylation.</title>
        <authorList>
            <person name="Hendriks I.A."/>
            <person name="Lyon D."/>
            <person name="Young C."/>
            <person name="Jensen L.J."/>
            <person name="Vertegaal A.C."/>
            <person name="Nielsen M.L."/>
        </authorList>
    </citation>
    <scope>SUMOYLATION [LARGE SCALE ANALYSIS] AT LYS-358</scope>
    <scope>IDENTIFICATION BY MASS SPECTROMETRY [LARGE SCALE ANALYSIS]</scope>
</reference>
<reference key="19">
    <citation type="journal article" date="2019" name="J. Virol.">
        <title>Identification of ARKL1 as a Negative Regulator of Epstein-Barr Virus Reactivation.</title>
        <authorList>
            <person name="Siddiqi U.Z."/>
            <person name="Vaidya A.S."/>
            <person name="Li X."/>
            <person name="Marcon E."/>
            <person name="Tsao S.W."/>
            <person name="Greenblatt J."/>
            <person name="Frappier L."/>
        </authorList>
    </citation>
    <scope>FUNCTION (MICROBIAL INFECTION)</scope>
    <scope>INTERACTION WITH JUN AND CSNK2B</scope>
    <scope>SUBCELLULAR LOCATION</scope>
</reference>
<reference key="20">
    <citation type="journal article" date="2022" name="Cell Metab.">
        <title>Phosphoproteomics of three exercise modalities identifies canonical signaling and C18ORF25 as an AMPK substrate regulating skeletal muscle function.</title>
        <authorList>
            <person name="Blazev R."/>
            <person name="Carl C.S."/>
            <person name="Ng Y.K."/>
            <person name="Molendijk J."/>
            <person name="Voldstedlund C.T."/>
            <person name="Zhao Y."/>
            <person name="Xiao D."/>
            <person name="Kueh A.J."/>
            <person name="Miotto P.M."/>
            <person name="Haynes V.R."/>
            <person name="Hardee J.P."/>
            <person name="Chung J.D."/>
            <person name="McNamara J.W."/>
            <person name="Qian H."/>
            <person name="Gregorevic P."/>
            <person name="Oakhill J.S."/>
            <person name="Herold M.J."/>
            <person name="Jensen T.E."/>
            <person name="Lisowski L."/>
            <person name="Lynch G.S."/>
            <person name="Dodd G.T."/>
            <person name="Watt M.J."/>
            <person name="Yang P."/>
            <person name="Kiens B."/>
            <person name="Richter E.A."/>
            <person name="Parker B.L."/>
        </authorList>
    </citation>
    <scope>FUNCTION</scope>
    <scope>PHOSPHORYLATION AT SER-67</scope>
    <scope>MUTAGENESIS OF 66-SER-SER-67</scope>
    <scope>TISSUE SPECIFICITY</scope>
</reference>
<protein>
    <recommendedName>
        <fullName evidence="14">Protein ARK2N</fullName>
    </recommendedName>
    <alternativeName>
        <fullName evidence="10">ARKadia-like protein 1</fullName>
    </alternativeName>
    <alternativeName>
        <fullName evidence="15">Arkadia (RNF111) N-terminal like PKA signaling regulator protein 2N</fullName>
    </alternativeName>
</protein>
<comment type="function">
    <text evidence="7">AMPK substrate important for exercise capacity and skeletal muscle function. Required for normal contraction-induced signaling.</text>
</comment>
<comment type="function">
    <text evidence="6">(Microbial infection) Upon Epstein-Barr virus (EBV) infection, suppresses viral BZLF1 expression and subsequent EBV reactivation by interacting with JUN and inhibiting its transcriptional activator activity on BZLF1 Z promoter.</text>
</comment>
<comment type="subunit">
    <text evidence="5 6">Interacts with CSNK2B (via KSSR) (PubMed:24216761, PubMed:31341047). Interacts with JUN; the interaction is mediated by CSNK2B (PubMed:31341047).</text>
</comment>
<comment type="interaction">
    <interactant intactId="EBI-742108">
        <id>Q96B23</id>
    </interactant>
    <interactant intactId="EBI-1031527">
        <id>Q16667</id>
        <label>CDKN3</label>
    </interactant>
    <organismsDiffer>false</organismsDiffer>
    <experiments>2</experiments>
</comment>
<comment type="interaction">
    <interactant intactId="EBI-742108">
        <id>Q96B23</id>
    </interactant>
    <interactant intactId="EBI-742054">
        <id>Q96D03</id>
        <label>DDIT4L</label>
    </interactant>
    <organismsDiffer>false</organismsDiffer>
    <experiments>3</experiments>
</comment>
<comment type="interaction">
    <interactant intactId="EBI-742108">
        <id>Q96B23</id>
    </interactant>
    <interactant intactId="EBI-2680803">
        <id>Q96N16</id>
        <label>JAKMIP1</label>
    </interactant>
    <organismsDiffer>false</organismsDiffer>
    <experiments>3</experiments>
</comment>
<comment type="interaction">
    <interactant intactId="EBI-742108">
        <id>Q96B23</id>
    </interactant>
    <interactant intactId="EBI-348259">
        <id>Q96EZ8</id>
        <label>MCRS1</label>
    </interactant>
    <organismsDiffer>false</organismsDiffer>
    <experiments>5</experiments>
</comment>
<comment type="interaction">
    <interactant intactId="EBI-742108">
        <id>Q96B23</id>
    </interactant>
    <interactant intactId="EBI-2340927">
        <id>P78317</id>
        <label>RNF4</label>
    </interactant>
    <organismsDiffer>false</organismsDiffer>
    <experiments>3</experiments>
</comment>
<comment type="interaction">
    <interactant intactId="EBI-742108">
        <id>Q96B23</id>
    </interactant>
    <interactant intactId="EBI-80140">
        <id>P63165</id>
        <label>SUMO1</label>
    </interactant>
    <organismsDiffer>false</organismsDiffer>
    <experiments>7</experiments>
</comment>
<comment type="interaction">
    <interactant intactId="EBI-742108">
        <id>Q96B23</id>
    </interactant>
    <interactant intactId="EBI-10175576">
        <id>G2XKQ0</id>
        <label>SUMO1P1</label>
    </interactant>
    <organismsDiffer>false</organismsDiffer>
    <experiments>3</experiments>
</comment>
<comment type="interaction">
    <interactant intactId="EBI-742108">
        <id>Q96B23</id>
    </interactant>
    <interactant intactId="EBI-529518">
        <id>Q86VP1</id>
        <label>TAX1BP1</label>
    </interactant>
    <organismsDiffer>false</organismsDiffer>
    <experiments>3</experiments>
</comment>
<comment type="interaction">
    <interactant intactId="EBI-742108">
        <id>Q96B23</id>
    </interactant>
    <interactant intactId="EBI-10180829">
        <id>Q7KZS0</id>
        <label>UBE2I</label>
    </interactant>
    <organismsDiffer>false</organismsDiffer>
    <experiments>3</experiments>
</comment>
<comment type="subcellular location">
    <subcellularLocation>
        <location evidence="6">Nucleus</location>
    </subcellularLocation>
</comment>
<comment type="alternative products">
    <event type="alternative splicing"/>
    <isoform>
        <id>Q96B23-1</id>
        <name>1</name>
        <sequence type="displayed"/>
    </isoform>
    <isoform>
        <id>Q96B23-2</id>
        <name>2</name>
        <sequence type="described" ref="VSP_014753"/>
    </isoform>
</comment>
<comment type="tissue specificity">
    <text evidence="7">Expressed in skeletal muscle.</text>
</comment>
<comment type="PTM">
    <text evidence="7">Phosphorylated at Ser-67 by AMPK. In skeletal muscle, phosphorylation is induced by exercise and seems to increase muscle contractile function.</text>
</comment>
<keyword id="KW-0025">Alternative splicing</keyword>
<keyword id="KW-0175">Coiled coil</keyword>
<keyword id="KW-1017">Isopeptide bond</keyword>
<keyword id="KW-0488">Methylation</keyword>
<keyword id="KW-0539">Nucleus</keyword>
<keyword id="KW-0597">Phosphoprotein</keyword>
<keyword id="KW-1267">Proteomics identification</keyword>
<keyword id="KW-1185">Reference proteome</keyword>
<keyword id="KW-0832">Ubl conjugation</keyword>
<proteinExistence type="evidence at protein level"/>
<gene>
    <name evidence="15" type="primary">ARK2N</name>
    <name evidence="10 12 13" type="synonym">ARKL1</name>
    <name type="synonym">C18orf25</name>
</gene>
<feature type="chain" id="PRO_0000079312" description="Protein ARK2N">
    <location>
        <begin position="1"/>
        <end position="404"/>
    </location>
</feature>
<feature type="region of interest" description="Disordered" evidence="3">
    <location>
        <begin position="1"/>
        <end position="50"/>
    </location>
</feature>
<feature type="region of interest" description="Disordered" evidence="3">
    <location>
        <begin position="63"/>
        <end position="255"/>
    </location>
</feature>
<feature type="region of interest" description="Required for interaction with CSNK2B" evidence="5">
    <location>
        <begin position="202"/>
        <end position="226"/>
    </location>
</feature>
<feature type="coiled-coil region" evidence="2">
    <location>
        <begin position="175"/>
        <end position="200"/>
    </location>
</feature>
<feature type="compositionally biased region" description="Basic and acidic residues" evidence="3">
    <location>
        <begin position="1"/>
        <end position="12"/>
    </location>
</feature>
<feature type="compositionally biased region" description="Basic and acidic residues" evidence="3">
    <location>
        <begin position="23"/>
        <end position="32"/>
    </location>
</feature>
<feature type="compositionally biased region" description="Polar residues" evidence="3">
    <location>
        <begin position="87"/>
        <end position="121"/>
    </location>
</feature>
<feature type="compositionally biased region" description="Basic residues" evidence="3">
    <location>
        <begin position="169"/>
        <end position="187"/>
    </location>
</feature>
<feature type="compositionally biased region" description="Low complexity" evidence="3">
    <location>
        <begin position="203"/>
        <end position="219"/>
    </location>
</feature>
<feature type="modified residue" description="Phosphoserine" evidence="17 18 19">
    <location>
        <position position="66"/>
    </location>
</feature>
<feature type="modified residue" description="Phosphoserine; by AMPK" evidence="7 19">
    <location>
        <position position="67"/>
    </location>
</feature>
<feature type="modified residue" description="Phosphoserine" evidence="18">
    <location>
        <position position="143"/>
    </location>
</feature>
<feature type="modified residue" description="Phosphoserine" evidence="18">
    <location>
        <position position="145"/>
    </location>
</feature>
<feature type="modified residue" description="Phosphoserine" evidence="1">
    <location>
        <position position="147"/>
    </location>
</feature>
<feature type="modified residue" description="Phosphoserine" evidence="16 18">
    <location>
        <position position="327"/>
    </location>
</feature>
<feature type="modified residue" description="Phosphoserine" evidence="16 18">
    <location>
        <position position="328"/>
    </location>
</feature>
<feature type="modified residue" description="Phosphoserine" evidence="16 18">
    <location>
        <position position="330"/>
    </location>
</feature>
<feature type="modified residue" description="Omega-N-methylarginine" evidence="20">
    <location>
        <position position="347"/>
    </location>
</feature>
<feature type="cross-link" description="Glycyl lysine isopeptide (Lys-Gly) (interchain with G-Cter in SUMO2)" evidence="21">
    <location>
        <position position="358"/>
    </location>
</feature>
<feature type="splice variant" id="VSP_014753" description="In isoform 2." evidence="8 9 11">
    <location>
        <begin position="239"/>
        <end position="299"/>
    </location>
</feature>
<feature type="sequence variant" id="VAR_080245" evidence="4">
    <location>
        <position position="314"/>
    </location>
</feature>
<feature type="mutagenesis site" description="Loss of phosphorylation by AMPK. Decreases muscle specific force." evidence="7">
    <original>SS</original>
    <variation>AA</variation>
    <location>
        <begin position="66"/>
        <end position="67"/>
    </location>
</feature>
<feature type="mutagenesis site" description="Increased phosphorylation. Increases muscle specific force." evidence="7">
    <original>SS</original>
    <variation>DD</variation>
    <location>
        <begin position="66"/>
        <end position="67"/>
    </location>
</feature>
<feature type="sequence conflict" description="In Ref. 3; CAD89920." evidence="14" ref="3">
    <original>I</original>
    <variation>V</variation>
    <location>
        <position position="233"/>
    </location>
</feature>
<feature type="sequence conflict" description="In Ref. 3; CAE45812." evidence="14" ref="3">
    <original>N</original>
    <variation>S</variation>
    <location>
        <position position="316"/>
    </location>
</feature>
<organism>
    <name type="scientific">Homo sapiens</name>
    <name type="common">Human</name>
    <dbReference type="NCBI Taxonomy" id="9606"/>
    <lineage>
        <taxon>Eukaryota</taxon>
        <taxon>Metazoa</taxon>
        <taxon>Chordata</taxon>
        <taxon>Craniata</taxon>
        <taxon>Vertebrata</taxon>
        <taxon>Euteleostomi</taxon>
        <taxon>Mammalia</taxon>
        <taxon>Eutheria</taxon>
        <taxon>Euarchontoglires</taxon>
        <taxon>Primates</taxon>
        <taxon>Haplorrhini</taxon>
        <taxon>Catarrhini</taxon>
        <taxon>Hominidae</taxon>
        <taxon>Homo</taxon>
    </lineage>
</organism>
<accession>Q96B23</accession>
<accession>A8K123</accession>
<accession>A8KAB6</accession>
<accession>Q5BIX2</accession>
<accession>Q5XG78</accession>
<accession>Q6N058</accession>
<accession>Q86TB5</accession>
<accession>Q8TCQ5</accession>